<gene>
    <name type="primary">msl1l1</name>
    <name type="ORF">zgc:175094</name>
</gene>
<protein>
    <recommendedName>
        <fullName>Male-specific lethal 1-like 1</fullName>
        <shortName>MSL1-like 1</shortName>
    </recommendedName>
    <alternativeName>
        <fullName>Male-specific lethal-1 homolog 1</fullName>
        <shortName>MSL-1</shortName>
    </alternativeName>
</protein>
<keyword id="KW-0156">Chromatin regulator</keyword>
<keyword id="KW-0175">Coiled coil</keyword>
<keyword id="KW-0539">Nucleus</keyword>
<keyword id="KW-1185">Reference proteome</keyword>
<sequence length="489" mass="55880">MTLRSIVIKSGGHRLDTSLIKKPAEINEYLASLKKETCDFATYVLCSICNSIIQKHQVQSKAKISCRKVLSCPDQSSAGGLGHKNWEPSGALILPSTKQMGAEGSPVKSRSLFCQTNHNHLVNMDPMVSNDNNQQREGEQVGAMVGDSSPEDSPSGKHWNVRKGSGLVDPQTSCIRQILLLQLELIEQQQKHLHNKNKEIEDLKAEKEMLMARIERMEHRLQMVKKDGVVSRPSQTTCHKEPEAETTTSDDVQHSGGRVQTPKQTQRGRGVKGSKGKFLLQDSPTGRSRRGQPRSPPTSQQESPALKEDMQCHSKEVPYLTTTEMYLSHWQTPPSPQRDPSTVHENTVEVPSWRESILEPLGQKEASDILECLDDSVFLKRHSKLELDEKRRKRWDIQRIREQRMFQRLQQRMNRRKVIQESEPELLSFHAEPEDVEYIMVTPFLPVVAFGSPLPNLKQQDFDLPWLDERSRCQPEVTKKRTPRRRCRK</sequence>
<proteinExistence type="evidence at transcript level"/>
<evidence type="ECO:0000250" key="1">
    <source>
        <dbReference type="UniProtKB" id="Q68DK7"/>
    </source>
</evidence>
<evidence type="ECO:0000250" key="2">
    <source>
        <dbReference type="UniProtKB" id="Q6PDM1"/>
    </source>
</evidence>
<evidence type="ECO:0000255" key="3"/>
<evidence type="ECO:0000255" key="4">
    <source>
        <dbReference type="PROSITE-ProRule" id="PRU01397"/>
    </source>
</evidence>
<evidence type="ECO:0000256" key="5">
    <source>
        <dbReference type="SAM" id="MobiDB-lite"/>
    </source>
</evidence>
<evidence type="ECO:0000305" key="6"/>
<feature type="chain" id="PRO_0000349238" description="Male-specific lethal 1-like 1">
    <location>
        <begin position="1"/>
        <end position="489"/>
    </location>
</feature>
<feature type="domain" description="PEHE" evidence="4">
    <location>
        <begin position="347"/>
        <end position="466"/>
    </location>
</feature>
<feature type="region of interest" description="Disordered" evidence="5">
    <location>
        <begin position="126"/>
        <end position="164"/>
    </location>
</feature>
<feature type="region of interest" description="Disordered" evidence="5">
    <location>
        <begin position="224"/>
        <end position="311"/>
    </location>
</feature>
<feature type="region of interest" description="Interaction with KAT8 HAT domain" evidence="4">
    <location>
        <begin position="371"/>
        <end position="389"/>
    </location>
</feature>
<feature type="coiled-coil region" evidence="3">
    <location>
        <begin position="179"/>
        <end position="227"/>
    </location>
</feature>
<feature type="short sequence motif" description="Bipartite nuclear localization signal" evidence="2">
    <location>
        <begin position="380"/>
        <end position="394"/>
    </location>
</feature>
<organism>
    <name type="scientific">Danio rerio</name>
    <name type="common">Zebrafish</name>
    <name type="synonym">Brachydanio rerio</name>
    <dbReference type="NCBI Taxonomy" id="7955"/>
    <lineage>
        <taxon>Eukaryota</taxon>
        <taxon>Metazoa</taxon>
        <taxon>Chordata</taxon>
        <taxon>Craniata</taxon>
        <taxon>Vertebrata</taxon>
        <taxon>Euteleostomi</taxon>
        <taxon>Actinopterygii</taxon>
        <taxon>Neopterygii</taxon>
        <taxon>Teleostei</taxon>
        <taxon>Ostariophysi</taxon>
        <taxon>Cypriniformes</taxon>
        <taxon>Danionidae</taxon>
        <taxon>Danioninae</taxon>
        <taxon>Danio</taxon>
    </lineage>
</organism>
<reference key="1">
    <citation type="submission" date="2007-12" db="EMBL/GenBank/DDBJ databases">
        <authorList>
            <consortium name="NIH - Zebrafish Gene Collection (ZGC) project"/>
        </authorList>
    </citation>
    <scope>NUCLEOTIDE SEQUENCE [LARGE SCALE MRNA]</scope>
    <source>
        <tissue>Kidney</tissue>
    </source>
</reference>
<dbReference type="EMBL" id="BC155827">
    <property type="protein sequence ID" value="AAI55828.1"/>
    <property type="molecule type" value="mRNA"/>
</dbReference>
<dbReference type="RefSeq" id="NP_001107940.1">
    <property type="nucleotide sequence ID" value="NM_001114468.1"/>
</dbReference>
<dbReference type="SMR" id="A9JRX0"/>
<dbReference type="FunCoup" id="A9JRX0">
    <property type="interactions" value="998"/>
</dbReference>
<dbReference type="STRING" id="7955.ENSDARP00000101527"/>
<dbReference type="PaxDb" id="7955-ENSDARP00000101527"/>
<dbReference type="GeneID" id="100000715"/>
<dbReference type="KEGG" id="dre:100000715"/>
<dbReference type="AGR" id="ZFIN:ZDB-GENE-030131-8168"/>
<dbReference type="CTD" id="100000715"/>
<dbReference type="ZFIN" id="ZDB-GENE-030131-8168">
    <property type="gene designation" value="msl1a"/>
</dbReference>
<dbReference type="eggNOG" id="ENOG502QQ0S">
    <property type="taxonomic scope" value="Eukaryota"/>
</dbReference>
<dbReference type="InParanoid" id="A9JRX0"/>
<dbReference type="OrthoDB" id="6022555at2759"/>
<dbReference type="PhylomeDB" id="A9JRX0"/>
<dbReference type="PRO" id="PR:A9JRX0"/>
<dbReference type="Proteomes" id="UP000000437">
    <property type="component" value="Chromosome 3"/>
</dbReference>
<dbReference type="GO" id="GO:0072487">
    <property type="term" value="C:MSL complex"/>
    <property type="evidence" value="ECO:0000318"/>
    <property type="project" value="GO_Central"/>
</dbReference>
<dbReference type="GO" id="GO:0016607">
    <property type="term" value="C:nuclear speck"/>
    <property type="evidence" value="ECO:0000250"/>
    <property type="project" value="UniProtKB"/>
</dbReference>
<dbReference type="GO" id="GO:0005654">
    <property type="term" value="C:nucleoplasm"/>
    <property type="evidence" value="ECO:0000250"/>
    <property type="project" value="UniProtKB"/>
</dbReference>
<dbReference type="GO" id="GO:0005634">
    <property type="term" value="C:nucleus"/>
    <property type="evidence" value="ECO:0000250"/>
    <property type="project" value="UniProtKB"/>
</dbReference>
<dbReference type="GO" id="GO:0006338">
    <property type="term" value="P:chromatin remodeling"/>
    <property type="evidence" value="ECO:0000250"/>
    <property type="project" value="UniProtKB"/>
</dbReference>
<dbReference type="FunFam" id="1.20.5.170:FF:000047">
    <property type="entry name" value="male-specific lethal 1 homolog isoform X1"/>
    <property type="match status" value="1"/>
</dbReference>
<dbReference type="Gene3D" id="1.20.5.170">
    <property type="match status" value="1"/>
</dbReference>
<dbReference type="Gene3D" id="6.10.250.2000">
    <property type="match status" value="1"/>
</dbReference>
<dbReference type="InterPro" id="IPR026711">
    <property type="entry name" value="Msl-1"/>
</dbReference>
<dbReference type="InterPro" id="IPR031840">
    <property type="entry name" value="MSL1_dimer"/>
</dbReference>
<dbReference type="InterPro" id="IPR029332">
    <property type="entry name" value="PEHE_dom"/>
</dbReference>
<dbReference type="PANTHER" id="PTHR21656:SF2">
    <property type="entry name" value="MALE-SPECIFIC LETHAL 1 HOMOLOG"/>
    <property type="match status" value="1"/>
</dbReference>
<dbReference type="PANTHER" id="PTHR21656">
    <property type="entry name" value="MALE-SPECIFIC LETHAL-1 PROTEIN"/>
    <property type="match status" value="1"/>
</dbReference>
<dbReference type="Pfam" id="PF16801">
    <property type="entry name" value="MSL1_dimer"/>
    <property type="match status" value="1"/>
</dbReference>
<dbReference type="Pfam" id="PF15275">
    <property type="entry name" value="PEHE"/>
    <property type="match status" value="1"/>
</dbReference>
<dbReference type="SMART" id="SM01300">
    <property type="entry name" value="PEHE"/>
    <property type="match status" value="1"/>
</dbReference>
<dbReference type="PROSITE" id="PS52052">
    <property type="entry name" value="PEHE"/>
    <property type="match status" value="1"/>
</dbReference>
<name>MSL1_DANRE</name>
<accession>A9JRX0</accession>
<comment type="function">
    <text evidence="1">Component of histone acetyltransferase complex. Within MSL complex, promotes ubiquitination of histone H2B.</text>
</comment>
<comment type="subunit">
    <text evidence="4">Component of a multisubunit histone acetyltransferase complex (MSL). Interacts (via PEHE domain) with KAT8 (via HAT domain) and MSL3 (via MRG domain); both interactions are direct.</text>
</comment>
<comment type="subcellular location">
    <subcellularLocation>
        <location evidence="1">Nucleus</location>
    </subcellularLocation>
    <subcellularLocation>
        <location evidence="2">Nucleus</location>
        <location evidence="2">Nucleoplasm</location>
    </subcellularLocation>
    <subcellularLocation>
        <location evidence="2">Nucleus speckle</location>
    </subcellularLocation>
</comment>
<comment type="similarity">
    <text evidence="6">Belongs to the msl-1 family.</text>
</comment>